<accession>Q0TAA0</accession>
<proteinExistence type="inferred from homology"/>
<feature type="chain" id="PRO_1000000478" description="Argininosuccinate lyase">
    <location>
        <begin position="1"/>
        <end position="457"/>
    </location>
</feature>
<keyword id="KW-0028">Amino-acid biosynthesis</keyword>
<keyword id="KW-0055">Arginine biosynthesis</keyword>
<keyword id="KW-0963">Cytoplasm</keyword>
<keyword id="KW-0456">Lyase</keyword>
<dbReference type="EC" id="4.3.2.1" evidence="1"/>
<dbReference type="EMBL" id="CP000247">
    <property type="protein sequence ID" value="ABG72129.1"/>
    <property type="molecule type" value="Genomic_DNA"/>
</dbReference>
<dbReference type="RefSeq" id="WP_001230079.1">
    <property type="nucleotide sequence ID" value="NC_008253.1"/>
</dbReference>
<dbReference type="SMR" id="Q0TAA0"/>
<dbReference type="KEGG" id="ecp:ECP_4173"/>
<dbReference type="HOGENOM" id="CLU_027272_2_3_6"/>
<dbReference type="UniPathway" id="UPA00068">
    <property type="reaction ID" value="UER00114"/>
</dbReference>
<dbReference type="Proteomes" id="UP000009182">
    <property type="component" value="Chromosome"/>
</dbReference>
<dbReference type="GO" id="GO:0005829">
    <property type="term" value="C:cytosol"/>
    <property type="evidence" value="ECO:0007669"/>
    <property type="project" value="TreeGrafter"/>
</dbReference>
<dbReference type="GO" id="GO:0004056">
    <property type="term" value="F:argininosuccinate lyase activity"/>
    <property type="evidence" value="ECO:0007669"/>
    <property type="project" value="UniProtKB-UniRule"/>
</dbReference>
<dbReference type="GO" id="GO:0042450">
    <property type="term" value="P:arginine biosynthetic process via ornithine"/>
    <property type="evidence" value="ECO:0007669"/>
    <property type="project" value="InterPro"/>
</dbReference>
<dbReference type="GO" id="GO:0006526">
    <property type="term" value="P:L-arginine biosynthetic process"/>
    <property type="evidence" value="ECO:0007669"/>
    <property type="project" value="UniProtKB-UniRule"/>
</dbReference>
<dbReference type="CDD" id="cd01359">
    <property type="entry name" value="Argininosuccinate_lyase"/>
    <property type="match status" value="1"/>
</dbReference>
<dbReference type="FunFam" id="1.10.275.10:FF:000004">
    <property type="entry name" value="Argininosuccinate lyase"/>
    <property type="match status" value="1"/>
</dbReference>
<dbReference type="FunFam" id="1.10.40.30:FF:000001">
    <property type="entry name" value="Argininosuccinate lyase"/>
    <property type="match status" value="1"/>
</dbReference>
<dbReference type="FunFam" id="1.20.200.10:FF:000006">
    <property type="entry name" value="Argininosuccinate lyase"/>
    <property type="match status" value="1"/>
</dbReference>
<dbReference type="Gene3D" id="1.10.40.30">
    <property type="entry name" value="Fumarase/aspartase (C-terminal domain)"/>
    <property type="match status" value="1"/>
</dbReference>
<dbReference type="Gene3D" id="1.20.200.10">
    <property type="entry name" value="Fumarase/aspartase (Central domain)"/>
    <property type="match status" value="1"/>
</dbReference>
<dbReference type="Gene3D" id="1.10.275.10">
    <property type="entry name" value="Fumarase/aspartase (N-terminal domain)"/>
    <property type="match status" value="1"/>
</dbReference>
<dbReference type="HAMAP" id="MF_00006">
    <property type="entry name" value="Arg_succ_lyase"/>
    <property type="match status" value="1"/>
</dbReference>
<dbReference type="InterPro" id="IPR029419">
    <property type="entry name" value="Arg_succ_lyase_C"/>
</dbReference>
<dbReference type="InterPro" id="IPR009049">
    <property type="entry name" value="Argininosuccinate_lyase"/>
</dbReference>
<dbReference type="InterPro" id="IPR024083">
    <property type="entry name" value="Fumarase/histidase_N"/>
</dbReference>
<dbReference type="InterPro" id="IPR020557">
    <property type="entry name" value="Fumarate_lyase_CS"/>
</dbReference>
<dbReference type="InterPro" id="IPR000362">
    <property type="entry name" value="Fumarate_lyase_fam"/>
</dbReference>
<dbReference type="InterPro" id="IPR022761">
    <property type="entry name" value="Fumarate_lyase_N"/>
</dbReference>
<dbReference type="InterPro" id="IPR008948">
    <property type="entry name" value="L-Aspartase-like"/>
</dbReference>
<dbReference type="NCBIfam" id="TIGR00838">
    <property type="entry name" value="argH"/>
    <property type="match status" value="1"/>
</dbReference>
<dbReference type="NCBIfam" id="NF008964">
    <property type="entry name" value="PRK12308.1"/>
    <property type="match status" value="1"/>
</dbReference>
<dbReference type="PANTHER" id="PTHR43814">
    <property type="entry name" value="ARGININOSUCCINATE LYASE"/>
    <property type="match status" value="1"/>
</dbReference>
<dbReference type="PANTHER" id="PTHR43814:SF1">
    <property type="entry name" value="ARGININOSUCCINATE LYASE"/>
    <property type="match status" value="1"/>
</dbReference>
<dbReference type="Pfam" id="PF14698">
    <property type="entry name" value="ASL_C2"/>
    <property type="match status" value="1"/>
</dbReference>
<dbReference type="Pfam" id="PF00206">
    <property type="entry name" value="Lyase_1"/>
    <property type="match status" value="1"/>
</dbReference>
<dbReference type="PRINTS" id="PR00145">
    <property type="entry name" value="ARGSUCLYASE"/>
</dbReference>
<dbReference type="PRINTS" id="PR00149">
    <property type="entry name" value="FUMRATELYASE"/>
</dbReference>
<dbReference type="SUPFAM" id="SSF48557">
    <property type="entry name" value="L-aspartase-like"/>
    <property type="match status" value="1"/>
</dbReference>
<dbReference type="PROSITE" id="PS00163">
    <property type="entry name" value="FUMARATE_LYASES"/>
    <property type="match status" value="1"/>
</dbReference>
<protein>
    <recommendedName>
        <fullName evidence="1">Argininosuccinate lyase</fullName>
        <shortName evidence="1">ASAL</shortName>
        <ecNumber evidence="1">4.3.2.1</ecNumber>
    </recommendedName>
    <alternativeName>
        <fullName evidence="1">Arginosuccinase</fullName>
    </alternativeName>
</protein>
<sequence>MALWGGRFTQAADQRFKQFNDSLRFDYRLAEQDIVGSVAWSKALVTVGVLTAEEQAQLEEALNVLLEDVRARPQQILESDAEDIHSWVEGKLIDKVGQLGKKLHTGRSRNDQVATDLKLWCKDTVSELLTANRQLQSALVETAQNNQDAVMPGYTHLQRAQPVTFAHWCLAYVEMLARDESRLQDALKRLDVSPLGCGALAGTAYEIDREQLAGWLGFASATRNSLDSVSDRDHVLELLSAAAIGMVHLSRFAEDLIFFNTGEAGFVELSDRVTSGSSLMPQKKNPDALELIRGKCGRVQGALTGMMMTLKGLPLAYNKDMQEDKEGLFDALDTWLDCLHMAALVLDGIQVKRPRCQEAAQQGYANATELADYLVAKGVPFREAHHIVGEAVVEAIRQGKALEDLPLSELQKFSQVIGEDVYPILSLQSCLDKRAAKGGVSPQQVAQAIAFAQARLG</sequence>
<comment type="catalytic activity">
    <reaction evidence="1">
        <text>2-(N(omega)-L-arginino)succinate = fumarate + L-arginine</text>
        <dbReference type="Rhea" id="RHEA:24020"/>
        <dbReference type="ChEBI" id="CHEBI:29806"/>
        <dbReference type="ChEBI" id="CHEBI:32682"/>
        <dbReference type="ChEBI" id="CHEBI:57472"/>
        <dbReference type="EC" id="4.3.2.1"/>
    </reaction>
</comment>
<comment type="pathway">
    <text evidence="1">Amino-acid biosynthesis; L-arginine biosynthesis; L-arginine from L-ornithine and carbamoyl phosphate: step 3/3.</text>
</comment>
<comment type="subcellular location">
    <subcellularLocation>
        <location evidence="1">Cytoplasm</location>
    </subcellularLocation>
</comment>
<comment type="similarity">
    <text evidence="1">Belongs to the lyase 1 family. Argininosuccinate lyase subfamily.</text>
</comment>
<evidence type="ECO:0000255" key="1">
    <source>
        <dbReference type="HAMAP-Rule" id="MF_00006"/>
    </source>
</evidence>
<name>ARLY_ECOL5</name>
<reference key="1">
    <citation type="journal article" date="2006" name="Mol. Microbiol.">
        <title>Role of pathogenicity island-associated integrases in the genome plasticity of uropathogenic Escherichia coli strain 536.</title>
        <authorList>
            <person name="Hochhut B."/>
            <person name="Wilde C."/>
            <person name="Balling G."/>
            <person name="Middendorf B."/>
            <person name="Dobrindt U."/>
            <person name="Brzuszkiewicz E."/>
            <person name="Gottschalk G."/>
            <person name="Carniel E."/>
            <person name="Hacker J."/>
        </authorList>
    </citation>
    <scope>NUCLEOTIDE SEQUENCE [LARGE SCALE GENOMIC DNA]</scope>
    <source>
        <strain>536 / UPEC</strain>
    </source>
</reference>
<gene>
    <name evidence="1" type="primary">argH</name>
    <name type="ordered locus">ECP_4173</name>
</gene>
<organism>
    <name type="scientific">Escherichia coli O6:K15:H31 (strain 536 / UPEC)</name>
    <dbReference type="NCBI Taxonomy" id="362663"/>
    <lineage>
        <taxon>Bacteria</taxon>
        <taxon>Pseudomonadati</taxon>
        <taxon>Pseudomonadota</taxon>
        <taxon>Gammaproteobacteria</taxon>
        <taxon>Enterobacterales</taxon>
        <taxon>Enterobacteriaceae</taxon>
        <taxon>Escherichia</taxon>
    </lineage>
</organism>